<gene>
    <name evidence="1" type="primary">ccmE</name>
    <name evidence="1" type="synonym">cycJ</name>
    <name type="ordered locus">Nham_1438</name>
</gene>
<organism>
    <name type="scientific">Nitrobacter hamburgensis (strain DSM 10229 / NCIMB 13809 / X14)</name>
    <dbReference type="NCBI Taxonomy" id="323097"/>
    <lineage>
        <taxon>Bacteria</taxon>
        <taxon>Pseudomonadati</taxon>
        <taxon>Pseudomonadota</taxon>
        <taxon>Alphaproteobacteria</taxon>
        <taxon>Hyphomicrobiales</taxon>
        <taxon>Nitrobacteraceae</taxon>
        <taxon>Nitrobacter</taxon>
    </lineage>
</organism>
<dbReference type="EMBL" id="CP000319">
    <property type="protein sequence ID" value="ABE62260.1"/>
    <property type="molecule type" value="Genomic_DNA"/>
</dbReference>
<dbReference type="RefSeq" id="WP_011509951.1">
    <property type="nucleotide sequence ID" value="NC_007964.1"/>
</dbReference>
<dbReference type="SMR" id="Q1QND7"/>
<dbReference type="STRING" id="323097.Nham_1438"/>
<dbReference type="KEGG" id="nha:Nham_1438"/>
<dbReference type="eggNOG" id="COG2332">
    <property type="taxonomic scope" value="Bacteria"/>
</dbReference>
<dbReference type="HOGENOM" id="CLU_079503_1_1_5"/>
<dbReference type="OrthoDB" id="9793584at2"/>
<dbReference type="Proteomes" id="UP000001953">
    <property type="component" value="Chromosome"/>
</dbReference>
<dbReference type="GO" id="GO:0005886">
    <property type="term" value="C:plasma membrane"/>
    <property type="evidence" value="ECO:0007669"/>
    <property type="project" value="UniProtKB-SubCell"/>
</dbReference>
<dbReference type="GO" id="GO:0020037">
    <property type="term" value="F:heme binding"/>
    <property type="evidence" value="ECO:0007669"/>
    <property type="project" value="InterPro"/>
</dbReference>
<dbReference type="GO" id="GO:0046872">
    <property type="term" value="F:metal ion binding"/>
    <property type="evidence" value="ECO:0007669"/>
    <property type="project" value="UniProtKB-KW"/>
</dbReference>
<dbReference type="GO" id="GO:0017004">
    <property type="term" value="P:cytochrome complex assembly"/>
    <property type="evidence" value="ECO:0007669"/>
    <property type="project" value="UniProtKB-KW"/>
</dbReference>
<dbReference type="FunFam" id="2.40.50.140:FF:000104">
    <property type="entry name" value="Cytochrome c-type biogenesis protein CcmE"/>
    <property type="match status" value="1"/>
</dbReference>
<dbReference type="Gene3D" id="2.40.50.140">
    <property type="entry name" value="Nucleic acid-binding proteins"/>
    <property type="match status" value="1"/>
</dbReference>
<dbReference type="HAMAP" id="MF_01959">
    <property type="entry name" value="CcmE"/>
    <property type="match status" value="1"/>
</dbReference>
<dbReference type="InterPro" id="IPR004329">
    <property type="entry name" value="CcmE"/>
</dbReference>
<dbReference type="InterPro" id="IPR036127">
    <property type="entry name" value="CcmE-like_sf"/>
</dbReference>
<dbReference type="InterPro" id="IPR012340">
    <property type="entry name" value="NA-bd_OB-fold"/>
</dbReference>
<dbReference type="NCBIfam" id="NF009727">
    <property type="entry name" value="PRK13254.1-1"/>
    <property type="match status" value="1"/>
</dbReference>
<dbReference type="NCBIfam" id="NF009729">
    <property type="entry name" value="PRK13254.1-3"/>
    <property type="match status" value="1"/>
</dbReference>
<dbReference type="NCBIfam" id="NF009731">
    <property type="entry name" value="PRK13254.1-5"/>
    <property type="match status" value="1"/>
</dbReference>
<dbReference type="PANTHER" id="PTHR34128">
    <property type="entry name" value="CYTOCHROME C-TYPE BIOGENESIS PROTEIN CCME HOMOLOG, MITOCHONDRIAL"/>
    <property type="match status" value="1"/>
</dbReference>
<dbReference type="PANTHER" id="PTHR34128:SF2">
    <property type="entry name" value="CYTOCHROME C-TYPE BIOGENESIS PROTEIN CCME HOMOLOG, MITOCHONDRIAL"/>
    <property type="match status" value="1"/>
</dbReference>
<dbReference type="Pfam" id="PF03100">
    <property type="entry name" value="CcmE"/>
    <property type="match status" value="1"/>
</dbReference>
<dbReference type="SUPFAM" id="SSF82093">
    <property type="entry name" value="Heme chaperone CcmE"/>
    <property type="match status" value="1"/>
</dbReference>
<sequence length="162" mass="17333">MTRKQRRLTMIGGSLVVLAIAAALVLNALRDSIVFFSTPVMVSEHHIQPGQRFRLGGLVQNGSLVRGDNLVVTFKVSDGSATLPVTYKGILPDLFREGQGVVAEGALDSSGVFRADTVLAKHDETYMPKEVADALKKQGHWKDDYGPQAGAVEASGKQGVSQ</sequence>
<comment type="function">
    <text evidence="1">Heme chaperone required for the biogenesis of c-type cytochromes. Transiently binds heme delivered by CcmC and transfers the heme to apo-cytochromes in a process facilitated by CcmF and CcmH.</text>
</comment>
<comment type="subcellular location">
    <subcellularLocation>
        <location evidence="1">Cell inner membrane</location>
        <topology evidence="1">Single-pass type II membrane protein</topology>
        <orientation evidence="1">Periplasmic side</orientation>
    </subcellularLocation>
</comment>
<comment type="similarity">
    <text evidence="1">Belongs to the CcmE/CycJ family.</text>
</comment>
<proteinExistence type="inferred from homology"/>
<evidence type="ECO:0000255" key="1">
    <source>
        <dbReference type="HAMAP-Rule" id="MF_01959"/>
    </source>
</evidence>
<evidence type="ECO:0000256" key="2">
    <source>
        <dbReference type="SAM" id="MobiDB-lite"/>
    </source>
</evidence>
<feature type="chain" id="PRO_1000070825" description="Cytochrome c-type biogenesis protein CcmE">
    <location>
        <begin position="1"/>
        <end position="162"/>
    </location>
</feature>
<feature type="topological domain" description="Cytoplasmic" evidence="1">
    <location>
        <begin position="1"/>
        <end position="7"/>
    </location>
</feature>
<feature type="transmembrane region" description="Helical; Signal-anchor for type II membrane protein" evidence="1">
    <location>
        <begin position="8"/>
        <end position="28"/>
    </location>
</feature>
<feature type="topological domain" description="Periplasmic" evidence="1">
    <location>
        <begin position="29"/>
        <end position="162"/>
    </location>
</feature>
<feature type="region of interest" description="Disordered" evidence="2">
    <location>
        <begin position="138"/>
        <end position="162"/>
    </location>
</feature>
<feature type="binding site" description="covalent" evidence="1">
    <location>
        <position position="122"/>
    </location>
    <ligand>
        <name>heme</name>
        <dbReference type="ChEBI" id="CHEBI:30413"/>
    </ligand>
</feature>
<feature type="binding site" description="axial binding residue" evidence="1">
    <location>
        <position position="126"/>
    </location>
    <ligand>
        <name>heme</name>
        <dbReference type="ChEBI" id="CHEBI:30413"/>
    </ligand>
    <ligandPart>
        <name>Fe</name>
        <dbReference type="ChEBI" id="CHEBI:18248"/>
    </ligandPart>
</feature>
<keyword id="KW-0997">Cell inner membrane</keyword>
<keyword id="KW-1003">Cell membrane</keyword>
<keyword id="KW-0201">Cytochrome c-type biogenesis</keyword>
<keyword id="KW-0349">Heme</keyword>
<keyword id="KW-0408">Iron</keyword>
<keyword id="KW-0472">Membrane</keyword>
<keyword id="KW-0479">Metal-binding</keyword>
<keyword id="KW-1185">Reference proteome</keyword>
<keyword id="KW-0735">Signal-anchor</keyword>
<keyword id="KW-0812">Transmembrane</keyword>
<keyword id="KW-1133">Transmembrane helix</keyword>
<name>CCME_NITHX</name>
<accession>Q1QND7</accession>
<reference key="1">
    <citation type="submission" date="2006-03" db="EMBL/GenBank/DDBJ databases">
        <title>Complete sequence of chromosome of Nitrobacter hamburgensis X14.</title>
        <authorList>
            <consortium name="US DOE Joint Genome Institute"/>
            <person name="Copeland A."/>
            <person name="Lucas S."/>
            <person name="Lapidus A."/>
            <person name="Barry K."/>
            <person name="Detter J.C."/>
            <person name="Glavina del Rio T."/>
            <person name="Hammon N."/>
            <person name="Israni S."/>
            <person name="Dalin E."/>
            <person name="Tice H."/>
            <person name="Pitluck S."/>
            <person name="Chain P."/>
            <person name="Malfatti S."/>
            <person name="Shin M."/>
            <person name="Vergez L."/>
            <person name="Schmutz J."/>
            <person name="Larimer F."/>
            <person name="Land M."/>
            <person name="Hauser L."/>
            <person name="Kyrpides N."/>
            <person name="Ivanova N."/>
            <person name="Ward B."/>
            <person name="Arp D."/>
            <person name="Klotz M."/>
            <person name="Stein L."/>
            <person name="O'Mullan G."/>
            <person name="Starkenburg S."/>
            <person name="Sayavedra L."/>
            <person name="Poret-Peterson A.T."/>
            <person name="Gentry M.E."/>
            <person name="Bruce D."/>
            <person name="Richardson P."/>
        </authorList>
    </citation>
    <scope>NUCLEOTIDE SEQUENCE [LARGE SCALE GENOMIC DNA]</scope>
    <source>
        <strain>DSM 10229 / NCIMB 13809 / X14</strain>
    </source>
</reference>
<protein>
    <recommendedName>
        <fullName evidence="1">Cytochrome c-type biogenesis protein CcmE</fullName>
    </recommendedName>
    <alternativeName>
        <fullName evidence="1">Cytochrome c maturation protein E</fullName>
    </alternativeName>
    <alternativeName>
        <fullName evidence="1">Heme chaperone CcmE</fullName>
    </alternativeName>
</protein>